<evidence type="ECO:0000250" key="1">
    <source>
        <dbReference type="UniProtKB" id="A0A0S4NM89"/>
    </source>
</evidence>
<evidence type="ECO:0000250" key="2">
    <source>
        <dbReference type="UniProtKB" id="A1C3L9"/>
    </source>
</evidence>
<evidence type="ECO:0000255" key="3">
    <source>
        <dbReference type="HAMAP-Rule" id="MF_01472"/>
    </source>
</evidence>
<evidence type="ECO:0000269" key="4">
    <source>
    </source>
</evidence>
<evidence type="ECO:0000269" key="5">
    <source>
    </source>
</evidence>
<evidence type="ECO:0000303" key="6">
    <source>
    </source>
</evidence>
<evidence type="ECO:0000303" key="7">
    <source>
    </source>
</evidence>
<evidence type="ECO:0000303" key="8">
    <source>
    </source>
</evidence>
<evidence type="ECO:0000305" key="9"/>
<evidence type="ECO:0000305" key="10">
    <source>
    </source>
</evidence>
<evidence type="ECO:0000305" key="11">
    <source>
    </source>
</evidence>
<evidence type="ECO:0007744" key="12">
    <source>
        <dbReference type="PDB" id="4PQG"/>
    </source>
</evidence>
<evidence type="ECO:0007829" key="13">
    <source>
        <dbReference type="PDB" id="4PQG"/>
    </source>
</evidence>
<keyword id="KW-0002">3D-structure</keyword>
<keyword id="KW-1003">Cell membrane</keyword>
<keyword id="KW-0963">Cytoplasm</keyword>
<keyword id="KW-0328">Glycosyltransferase</keyword>
<keyword id="KW-0472">Membrane</keyword>
<keyword id="KW-0547">Nucleotide-binding</keyword>
<keyword id="KW-1185">Reference proteome</keyword>
<keyword id="KW-0808">Transferase</keyword>
<protein>
    <recommendedName>
        <fullName evidence="3 9">UDP-N-acetylglucosamine--peptide N-acetylglucosaminyltransferase GtfA subunit</fullName>
        <ecNumber evidence="3 4">2.4.1.-</ecNumber>
    </recommendedName>
    <alternativeName>
        <fullName evidence="3 8">Glycosyltransferase GtfA</fullName>
    </alternativeName>
    <alternativeName>
        <fullName evidence="8">O-linked N-acetyl-D-glucosamine (O-GlcNAc) transferase</fullName>
    </alternativeName>
</protein>
<organism>
    <name type="scientific">Streptococcus pneumoniae serotype 4 (strain ATCC BAA-334 / TIGR4)</name>
    <dbReference type="NCBI Taxonomy" id="170187"/>
    <lineage>
        <taxon>Bacteria</taxon>
        <taxon>Bacillati</taxon>
        <taxon>Bacillota</taxon>
        <taxon>Bacilli</taxon>
        <taxon>Lactobacillales</taxon>
        <taxon>Streptococcaceae</taxon>
        <taxon>Streptococcus</taxon>
    </lineage>
</organism>
<comment type="function">
    <text evidence="1 4 5 10">Required for the polymorphic O-glycosylation of serine-rich repeat protein PsrP. Catalyzes the first step in glycosylation by transferring N-acetylglucosamine from UDP-GlcNAc to serine residues in PsrP (PubMed:24936067, PubMed:28246170). Part of the accessory SecA2/SecY2 system specifically required to export serine-rich repeat cell wall proteins encoded upstream in the same operon (Probable). The GtfA-GtfB complex adds GlcNAc from UDP-GlcNAc to PsrP (experimentally characterized with truncated PsrP-SSR1 constructs); this subunit alone has weak N-acetylglucosaminyl transferase activity that is 10-fold stimulated by GtfB. The complex requires at least a 25 residue-long peptide for activity; the in vitro assay has only been seen to glycosylate Ser residues (PubMed:24936067). The alpha linkage was shown in L.reuteri.</text>
</comment>
<comment type="catalytic activity">
    <reaction evidence="1 3 11">
        <text>L-seryl-[protein] + UDP-N-acetyl-alpha-D-glucosamine = 3-O-[N-acetyl-alpha-D-glucosaminyl]-L-seryl-[protein] + UDP + H(+)</text>
        <dbReference type="Rhea" id="RHEA:59872"/>
        <dbReference type="Rhea" id="RHEA-COMP:9863"/>
        <dbReference type="Rhea" id="RHEA-COMP:15471"/>
        <dbReference type="ChEBI" id="CHEBI:15378"/>
        <dbReference type="ChEBI" id="CHEBI:29999"/>
        <dbReference type="ChEBI" id="CHEBI:57705"/>
        <dbReference type="ChEBI" id="CHEBI:58223"/>
        <dbReference type="ChEBI" id="CHEBI:143279"/>
    </reaction>
</comment>
<comment type="biophysicochemical properties">
    <kinetics>
        <text evidence="4">kcat for hydrolysis of UDP-N-acetyl-alpha-D-glucosamine with transfer of GlcNAc to PsrP-SSR1 and generation of UDP is 76.0 min(-1) for GtfA-GtfB and 7.35 min(-1) for GtfA alone.</text>
    </kinetics>
</comment>
<comment type="pathway">
    <text evidence="3 4 5">Protein modification; protein glycosylation.</text>
</comment>
<comment type="subunit">
    <text evidence="4">Monomer (PubMed:24936067). Interacts with stabilizing protein GtfB, probably as a heterotetramer with 2 subunits each of GtfA and GtfB, part of the accessory SecA2/SecY2 protein translocation apparatus (PubMed:24936067).</text>
</comment>
<comment type="subcellular location">
    <subcellularLocation>
        <location evidence="3">Cytoplasm</location>
    </subcellularLocation>
    <subcellularLocation>
        <location evidence="2 3">Cell membrane</location>
        <topology evidence="3">Peripheral membrane protein</topology>
    </subcellularLocation>
    <text evidence="2 3">Cell membrane association requires GtfB.</text>
</comment>
<comment type="domain">
    <text evidence="4">Has 2 Rossmann-like domains, called R-fold-1 and R-fold-2. R-fold-1 is interrupted by an extended beta-sheet domain that loops out of the structure and is required for recognizing both PsrP substrate and coactivator GtfB. UDP and N-acetyl-D-glucosamine bind between the Rossmann-like folds.</text>
</comment>
<comment type="miscellaneous">
    <text evidence="6 7 9">Encoded in RD10, a pathogenicity island with an atypical GC content that is associated with invasive pneumococcal disease. Pathogenicity islands account for greater than half the genomic diversity observed between isolates (PubMed:11463916, PubMed:16861665). The main function of this island seems to be correct synthesis and export of pneumococcal serine-rich repeat protein PsrP (Probable).</text>
</comment>
<comment type="similarity">
    <text evidence="3">Belongs to the glycosyltransferase group 1 family. Glycosyltransferase 4 subfamily.</text>
</comment>
<proteinExistence type="evidence at protein level"/>
<sequence>MTIYNINLGIGWASSGVEYAQAYRAGVFRKLNLSSKFIFTDMILADNIQHLTANIGFDDNQVIWLYNHFTDIKIAPTSVTVDDVLAYFGGEESHREKNGKVLRVFFFDQDKFVTCYLVDENKDLVQHAEYVFKGNLIRKDYFSYTRYCSEYFAPKDNVAVLYQRTFYNEDGTPVYDILMNQGKEEVYHFKDKIFYGKQAFVRAFMKSLNLNKSDLVILDRETGIGQVVFEEAQTAHLAVVVHAEHYSENATNEDYILWNNYYDYQFTNADKVDFFIVSTDRQNEVLQEQFAKYTQHQPKIVTIPVGSIDSLTDSSQGRKPFSLITASRLAKEKHIDWLVKAVIEAHKELPELTFDIYGSGGEDSLLREIIANHQAEDYIQLKGHAELSQIYSQYEVYLTASTSEGFGLTLMEAIGSGLPLIGFDVPYGNQTFIEDGQNGYLIPSSSDHVEDQIKQAYAAKICQLYQENRLEAMRAYSYQIAEGFLTKEILEKWKKTVEEVLHD</sequence>
<accession>A0A0H2URG7</accession>
<feature type="chain" id="PRO_0000447202" description="UDP-N-acetylglucosamine--peptide N-acetylglucosaminyltransferase GtfA subunit">
    <location>
        <begin position="1"/>
        <end position="503"/>
    </location>
</feature>
<feature type="region of interest" description="N-terminus R-fold-1" evidence="4">
    <location>
        <begin position="1"/>
        <end position="78"/>
    </location>
</feature>
<feature type="region of interest" description="Extended beta-sheet domain" evidence="4">
    <location>
        <begin position="79"/>
        <end position="195"/>
    </location>
</feature>
<feature type="region of interest" description="C-terminus R-fold-1" evidence="4">
    <location>
        <begin position="196"/>
        <end position="306"/>
    </location>
</feature>
<feature type="region of interest" description="R-fold-2" evidence="4">
    <location>
        <begin position="307"/>
        <end position="503"/>
    </location>
</feature>
<feature type="binding site" evidence="3 4 12">
    <location>
        <begin position="16"/>
        <end position="19"/>
    </location>
    <ligand>
        <name>UDP</name>
        <dbReference type="ChEBI" id="CHEBI:58223"/>
    </ligand>
</feature>
<feature type="binding site" evidence="3 4 12">
    <location>
        <position position="242"/>
    </location>
    <ligand>
        <name>N-acetyl-D-glucosamine</name>
        <dbReference type="ChEBI" id="CHEBI:506227"/>
    </ligand>
</feature>
<feature type="binding site" evidence="4 12">
    <location>
        <position position="328"/>
    </location>
    <ligand>
        <name>UDP</name>
        <dbReference type="ChEBI" id="CHEBI:58223"/>
    </ligand>
</feature>
<feature type="binding site" evidence="12">
    <location>
        <position position="332"/>
    </location>
    <ligand>
        <name>N-acetyl-D-glucosamine</name>
        <dbReference type="ChEBI" id="CHEBI:506227"/>
    </ligand>
</feature>
<feature type="binding site" evidence="4 12">
    <location>
        <position position="333"/>
    </location>
    <ligand>
        <name>UDP</name>
        <dbReference type="ChEBI" id="CHEBI:58223"/>
    </ligand>
</feature>
<feature type="binding site" evidence="4 12">
    <location>
        <position position="358"/>
    </location>
    <ligand>
        <name>UDP</name>
        <dbReference type="ChEBI" id="CHEBI:58223"/>
    </ligand>
</feature>
<feature type="binding site" evidence="3 4 12">
    <location>
        <begin position="384"/>
        <end position="385"/>
    </location>
    <ligand>
        <name>UDP</name>
        <dbReference type="ChEBI" id="CHEBI:58223"/>
    </ligand>
</feature>
<feature type="binding site" evidence="3 4 12">
    <location>
        <begin position="404"/>
        <end position="407"/>
    </location>
    <ligand>
        <name>N-acetyl-D-glucosamine</name>
        <dbReference type="ChEBI" id="CHEBI:506227"/>
    </ligand>
</feature>
<feature type="binding site" evidence="4 12">
    <location>
        <begin position="408"/>
        <end position="412"/>
    </location>
    <ligand>
        <name>UDP</name>
        <dbReference type="ChEBI" id="CHEBI:58223"/>
    </ligand>
</feature>
<feature type="mutagenesis site" description="Decreased N-acetylglucosaminyl transferase activity, decreased binding of PsrP." evidence="4">
    <original>N</original>
    <variation>A</variation>
    <location>
        <position position="98"/>
    </location>
</feature>
<feature type="mutagenesis site" description="Decreased N-acetylglucosaminyl transferase activity, decreased binding of PsrP." evidence="4">
    <original>R</original>
    <variation>A</variation>
    <location>
        <position position="103"/>
    </location>
</feature>
<feature type="mutagenesis site" description="Decreased N-acetylglucosaminyl transferase activity, decreased binding of PsrP." evidence="4">
    <original>Y</original>
    <variation>A</variation>
    <location>
        <position position="116"/>
    </location>
</feature>
<feature type="mutagenesis site" description="Loss of N-acetylglucosaminyl transferase activity." evidence="4">
    <original>E</original>
    <variation>A</variation>
    <location>
        <position position="244"/>
    </location>
</feature>
<feature type="mutagenesis site" description="Loss of N-acetylglucosaminyl transferase activity." evidence="4">
    <original>R</original>
    <variation>A</variation>
    <location>
        <position position="328"/>
    </location>
</feature>
<feature type="mutagenesis site" description="Loss of N-acetylglucosaminyl transferase activity, nearly wild-type binding of PsrP." evidence="4">
    <original>E</original>
    <variation>A</variation>
    <location>
        <position position="332"/>
    </location>
</feature>
<feature type="mutagenesis site" description="Loss of N-acetylglucosaminyl transferase activity." evidence="4">
    <original>K</original>
    <variation>A</variation>
    <location>
        <position position="333"/>
    </location>
</feature>
<feature type="mutagenesis site" description="Significant loss of N-acetylglucosaminyl transferase activity." evidence="4">
    <original>S</original>
    <variation>A</variation>
    <location>
        <position position="403"/>
    </location>
</feature>
<feature type="strand" evidence="13">
    <location>
        <begin position="2"/>
        <end position="8"/>
    </location>
</feature>
<feature type="helix" evidence="13">
    <location>
        <begin position="16"/>
        <end position="30"/>
    </location>
</feature>
<feature type="strand" evidence="13">
    <location>
        <begin position="34"/>
        <end position="39"/>
    </location>
</feature>
<feature type="helix" evidence="13">
    <location>
        <begin position="48"/>
        <end position="55"/>
    </location>
</feature>
<feature type="helix" evidence="13">
    <location>
        <begin position="59"/>
        <end position="61"/>
    </location>
</feature>
<feature type="strand" evidence="13">
    <location>
        <begin position="62"/>
        <end position="64"/>
    </location>
</feature>
<feature type="helix" evidence="13">
    <location>
        <begin position="65"/>
        <end position="68"/>
    </location>
</feature>
<feature type="helix" evidence="13">
    <location>
        <begin position="81"/>
        <end position="85"/>
    </location>
</feature>
<feature type="strand" evidence="13">
    <location>
        <begin position="92"/>
        <end position="98"/>
    </location>
</feature>
<feature type="strand" evidence="13">
    <location>
        <begin position="101"/>
        <end position="108"/>
    </location>
</feature>
<feature type="strand" evidence="13">
    <location>
        <begin position="111"/>
        <end position="119"/>
    </location>
</feature>
<feature type="strand" evidence="13">
    <location>
        <begin position="124"/>
        <end position="132"/>
    </location>
</feature>
<feature type="strand" evidence="13">
    <location>
        <begin position="135"/>
        <end position="155"/>
    </location>
</feature>
<feature type="strand" evidence="13">
    <location>
        <begin position="158"/>
        <end position="167"/>
    </location>
</feature>
<feature type="strand" evidence="13">
    <location>
        <begin position="173"/>
        <end position="180"/>
    </location>
</feature>
<feature type="strand" evidence="13">
    <location>
        <begin position="183"/>
        <end position="188"/>
    </location>
</feature>
<feature type="strand" evidence="13">
    <location>
        <begin position="193"/>
        <end position="196"/>
    </location>
</feature>
<feature type="helix" evidence="13">
    <location>
        <begin position="197"/>
        <end position="207"/>
    </location>
</feature>
<feature type="strand" evidence="13">
    <location>
        <begin position="215"/>
        <end position="219"/>
    </location>
</feature>
<feature type="turn" evidence="13">
    <location>
        <begin position="222"/>
        <end position="224"/>
    </location>
</feature>
<feature type="helix" evidence="13">
    <location>
        <begin position="225"/>
        <end position="232"/>
    </location>
</feature>
<feature type="strand" evidence="13">
    <location>
        <begin position="235"/>
        <end position="240"/>
    </location>
</feature>
<feature type="turn" evidence="13">
    <location>
        <begin position="248"/>
        <end position="250"/>
    </location>
</feature>
<feature type="turn" evidence="13">
    <location>
        <begin position="260"/>
        <end position="262"/>
    </location>
</feature>
<feature type="helix" evidence="13">
    <location>
        <begin position="263"/>
        <end position="267"/>
    </location>
</feature>
<feature type="helix" evidence="13">
    <location>
        <begin position="269"/>
        <end position="271"/>
    </location>
</feature>
<feature type="strand" evidence="13">
    <location>
        <begin position="273"/>
        <end position="279"/>
    </location>
</feature>
<feature type="helix" evidence="13">
    <location>
        <begin position="280"/>
        <end position="293"/>
    </location>
</feature>
<feature type="strand" evidence="13">
    <location>
        <begin position="300"/>
        <end position="302"/>
    </location>
</feature>
<feature type="strand" evidence="13">
    <location>
        <begin position="308"/>
        <end position="310"/>
    </location>
</feature>
<feature type="strand" evidence="13">
    <location>
        <begin position="322"/>
        <end position="327"/>
    </location>
</feature>
<feature type="helix" evidence="13">
    <location>
        <begin position="331"/>
        <end position="333"/>
    </location>
</feature>
<feature type="helix" evidence="13">
    <location>
        <begin position="335"/>
        <end position="345"/>
    </location>
</feature>
<feature type="turn" evidence="13">
    <location>
        <begin position="346"/>
        <end position="348"/>
    </location>
</feature>
<feature type="strand" evidence="13">
    <location>
        <begin position="353"/>
        <end position="357"/>
    </location>
</feature>
<feature type="helix" evidence="13">
    <location>
        <begin position="363"/>
        <end position="372"/>
    </location>
</feature>
<feature type="turn" evidence="13">
    <location>
        <begin position="376"/>
        <end position="378"/>
    </location>
</feature>
<feature type="strand" evidence="13">
    <location>
        <begin position="379"/>
        <end position="384"/>
    </location>
</feature>
<feature type="turn" evidence="13">
    <location>
        <begin position="388"/>
        <end position="390"/>
    </location>
</feature>
<feature type="helix" evidence="13">
    <location>
        <begin position="391"/>
        <end position="393"/>
    </location>
</feature>
<feature type="strand" evidence="13">
    <location>
        <begin position="394"/>
        <end position="398"/>
    </location>
</feature>
<feature type="strand" evidence="13">
    <location>
        <begin position="404"/>
        <end position="406"/>
    </location>
</feature>
<feature type="helix" evidence="13">
    <location>
        <begin position="408"/>
        <end position="415"/>
    </location>
</feature>
<feature type="strand" evidence="13">
    <location>
        <begin position="420"/>
        <end position="424"/>
    </location>
</feature>
<feature type="helix" evidence="13">
    <location>
        <begin position="428"/>
        <end position="432"/>
    </location>
</feature>
<feature type="turn" evidence="13">
    <location>
        <begin position="435"/>
        <end position="437"/>
    </location>
</feature>
<feature type="strand" evidence="13">
    <location>
        <begin position="438"/>
        <end position="442"/>
    </location>
</feature>
<feature type="helix" evidence="13">
    <location>
        <begin position="450"/>
        <end position="466"/>
    </location>
</feature>
<feature type="helix" evidence="13">
    <location>
        <begin position="470"/>
        <end position="481"/>
    </location>
</feature>
<feature type="helix" evidence="13">
    <location>
        <begin position="482"/>
        <end position="484"/>
    </location>
</feature>
<feature type="helix" evidence="13">
    <location>
        <begin position="486"/>
        <end position="500"/>
    </location>
</feature>
<dbReference type="EC" id="2.4.1.-" evidence="3 4"/>
<dbReference type="EMBL" id="AE005672">
    <property type="protein sequence ID" value="AAK75833.1"/>
    <property type="molecule type" value="Genomic_DNA"/>
</dbReference>
<dbReference type="RefSeq" id="WP_000158460.1">
    <property type="nucleotide sequence ID" value="NZ_CP155539.1"/>
</dbReference>
<dbReference type="PDB" id="4PQG">
    <property type="method" value="X-ray"/>
    <property type="resolution" value="2.00 A"/>
    <property type="chains" value="A/B=1-503"/>
</dbReference>
<dbReference type="PDBsum" id="4PQG"/>
<dbReference type="SMR" id="A0A0H2URG7"/>
<dbReference type="PaxDb" id="170187-SP_1758"/>
<dbReference type="EnsemblBacteria" id="AAK75833">
    <property type="protein sequence ID" value="AAK75833"/>
    <property type="gene ID" value="SP_1758"/>
</dbReference>
<dbReference type="KEGG" id="spn:SP_1758"/>
<dbReference type="eggNOG" id="COG0438">
    <property type="taxonomic scope" value="Bacteria"/>
</dbReference>
<dbReference type="PhylomeDB" id="A0A0H2URG7"/>
<dbReference type="BioCyc" id="SPNE170187:G1FZB-1783-MONOMER"/>
<dbReference type="BRENDA" id="2.4.1.255">
    <property type="organism ID" value="9553"/>
</dbReference>
<dbReference type="UniPathway" id="UPA00378"/>
<dbReference type="EvolutionaryTrace" id="A0A0H2URG7"/>
<dbReference type="Proteomes" id="UP000000585">
    <property type="component" value="Chromosome"/>
</dbReference>
<dbReference type="GO" id="GO:0005737">
    <property type="term" value="C:cytoplasm"/>
    <property type="evidence" value="ECO:0007669"/>
    <property type="project" value="UniProtKB-SubCell"/>
</dbReference>
<dbReference type="GO" id="GO:0005886">
    <property type="term" value="C:plasma membrane"/>
    <property type="evidence" value="ECO:0007669"/>
    <property type="project" value="UniProtKB-SubCell"/>
</dbReference>
<dbReference type="GO" id="GO:0017122">
    <property type="term" value="C:protein N-acetylglucosaminyltransferase complex"/>
    <property type="evidence" value="ECO:0000314"/>
    <property type="project" value="UniProtKB"/>
</dbReference>
<dbReference type="GO" id="GO:0016757">
    <property type="term" value="F:glycosyltransferase activity"/>
    <property type="evidence" value="ECO:0000314"/>
    <property type="project" value="UniProtKB"/>
</dbReference>
<dbReference type="GO" id="GO:0000166">
    <property type="term" value="F:nucleotide binding"/>
    <property type="evidence" value="ECO:0007669"/>
    <property type="project" value="UniProtKB-KW"/>
</dbReference>
<dbReference type="GO" id="GO:0018242">
    <property type="term" value="P:protein O-linked glycosylation via serine"/>
    <property type="evidence" value="ECO:0000314"/>
    <property type="project" value="UniProtKB"/>
</dbReference>
<dbReference type="CDD" id="cd04949">
    <property type="entry name" value="GT4_GtfA-like"/>
    <property type="match status" value="1"/>
</dbReference>
<dbReference type="FunFam" id="3.40.50.2000:FF:000196">
    <property type="entry name" value="UDP-N-acetylglucosamine--peptide N-acetylglucosaminyltransferase GtfA subunit"/>
    <property type="match status" value="1"/>
</dbReference>
<dbReference type="FunFam" id="3.40.50.2000:FF:000209">
    <property type="entry name" value="UDP-N-acetylglucosamine--peptide N-acetylglucosaminyltransferase GtfA subunit"/>
    <property type="match status" value="1"/>
</dbReference>
<dbReference type="Gene3D" id="3.40.50.2000">
    <property type="entry name" value="Glycogen Phosphorylase B"/>
    <property type="match status" value="2"/>
</dbReference>
<dbReference type="HAMAP" id="MF_01472">
    <property type="entry name" value="GtfA"/>
    <property type="match status" value="1"/>
</dbReference>
<dbReference type="InterPro" id="IPR014267">
    <property type="entry name" value="GtfA"/>
</dbReference>
<dbReference type="InterPro" id="IPR054396">
    <property type="entry name" value="GtfA_EBD"/>
</dbReference>
<dbReference type="NCBIfam" id="TIGR02918">
    <property type="entry name" value="accessory Sec system glycosyltransferase GtfA"/>
    <property type="match status" value="1"/>
</dbReference>
<dbReference type="PANTHER" id="PTHR12526">
    <property type="entry name" value="GLYCOSYLTRANSFERASE"/>
    <property type="match status" value="1"/>
</dbReference>
<dbReference type="PANTHER" id="PTHR12526:SF629">
    <property type="entry name" value="TEICHURONIC ACID BIOSYNTHESIS GLYCOSYLTRANSFERASE TUAH-RELATED"/>
    <property type="match status" value="1"/>
</dbReference>
<dbReference type="Pfam" id="PF13692">
    <property type="entry name" value="Glyco_trans_1_4"/>
    <property type="match status" value="1"/>
</dbReference>
<dbReference type="Pfam" id="PF22145">
    <property type="entry name" value="GtfA_EBD"/>
    <property type="match status" value="1"/>
</dbReference>
<dbReference type="SUPFAM" id="SSF53756">
    <property type="entry name" value="UDP-Glycosyltransferase/glycogen phosphorylase"/>
    <property type="match status" value="1"/>
</dbReference>
<name>GTFA_STRPN</name>
<reference key="1">
    <citation type="journal article" date="2001" name="Science">
        <title>Complete genome sequence of a virulent isolate of Streptococcus pneumoniae.</title>
        <authorList>
            <person name="Tettelin H."/>
            <person name="Nelson K.E."/>
            <person name="Paulsen I.T."/>
            <person name="Eisen J.A."/>
            <person name="Read T.D."/>
            <person name="Peterson S.N."/>
            <person name="Heidelberg J.F."/>
            <person name="DeBoy R.T."/>
            <person name="Haft D.H."/>
            <person name="Dodson R.J."/>
            <person name="Durkin A.S."/>
            <person name="Gwinn M.L."/>
            <person name="Kolonay J.F."/>
            <person name="Nelson W.C."/>
            <person name="Peterson J.D."/>
            <person name="Umayam L.A."/>
            <person name="White O."/>
            <person name="Salzberg S.L."/>
            <person name="Lewis M.R."/>
            <person name="Radune D."/>
            <person name="Holtzapple E.K."/>
            <person name="Khouri H.M."/>
            <person name="Wolf A.M."/>
            <person name="Utterback T.R."/>
            <person name="Hansen C.L."/>
            <person name="McDonald L.A."/>
            <person name="Feldblyum T.V."/>
            <person name="Angiuoli S.V."/>
            <person name="Dickinson T."/>
            <person name="Hickey E.K."/>
            <person name="Holt I.E."/>
            <person name="Loftus B.J."/>
            <person name="Yang F."/>
            <person name="Smith H.O."/>
            <person name="Venter J.C."/>
            <person name="Dougherty B.A."/>
            <person name="Morrison D.A."/>
            <person name="Hollingshead S.K."/>
            <person name="Fraser C.M."/>
        </authorList>
    </citation>
    <scope>NUCLEOTIDE SEQUENCE [LARGE SCALE GENOMIC DNA]</scope>
    <source>
        <strain>ATCC BAA-334 / TIGR4</strain>
    </source>
</reference>
<reference key="2">
    <citation type="journal article" date="2006" name="Infect. Immun.">
        <title>Identification of a candidate Streptococcus pneumoniae core genome and regions of diversity correlated with invasive pneumococcal disease.</title>
        <authorList>
            <person name="Obert C."/>
            <person name="Sublett J."/>
            <person name="Kaushal D."/>
            <person name="Hinojosa E."/>
            <person name="Barton T."/>
            <person name="Tuomanen E.I."/>
            <person name="Orihuela C.J."/>
        </authorList>
    </citation>
    <scope>DISCUSSION OF SEQUENCE</scope>
    <source>
        <strain>ATCC BAA-334 / TIGR4</strain>
    </source>
</reference>
<reference key="3">
    <citation type="journal article" date="2017" name="J. Biol. Chem.">
        <title>Defining the enzymatic pathway for polymorphic O-glycosylation of the pneumococcal serine-rich repeat protein PsrP.</title>
        <authorList>
            <person name="Jiang Y.L."/>
            <person name="Jin H."/>
            <person name="Yang H.B."/>
            <person name="Zhao R.L."/>
            <person name="Wang S."/>
            <person name="Chen Y."/>
            <person name="Zhou C.Z."/>
        </authorList>
    </citation>
    <scope>FUNCTION</scope>
    <scope>PATHWAY</scope>
    <source>
        <strain>ATCC BAA-334 / TIGR4</strain>
    </source>
</reference>
<reference evidence="12" key="4">
    <citation type="journal article" date="2014" name="J. Biol. Chem.">
        <title>Structure of a novel O-linked N-acetyl-D-glucosamine (O-GlcNAc) transferase, GtfA, reveals insights into the glycosylation of pneumococcal serine-rich repeat adhesins.</title>
        <authorList>
            <person name="Shi W.W."/>
            <person name="Jiang Y.L."/>
            <person name="Zhu F."/>
            <person name="Yang Y.H."/>
            <person name="Shao Q.Y."/>
            <person name="Yang H.B."/>
            <person name="Ren Y.M."/>
            <person name="Wu H."/>
            <person name="Chen Y."/>
            <person name="Zhou C.Z."/>
        </authorList>
    </citation>
    <scope>X-RAY CRYSTALLOGRAPHY (2.00 ANGSTROMS) IN COMPLEX WITH N-ACETYL-D-GLUCOSAMINE AND UDP</scope>
    <scope>FUNCTION</scope>
    <scope>CATALYTIC ACTIVITY</scope>
    <scope>BIOPHYSICOCHEMICAL PROPERTIES</scope>
    <scope>SUBUNIT</scope>
    <scope>DOMAIN</scope>
    <scope>MUTAGENESIS OF ASN-98; ARG-103; TYR-116; GLU-244; ARG-328; GLU-332; LYS-333 AND SER-403</scope>
    <source>
        <strain>ATCC BAA-334 / TIGR4</strain>
    </source>
</reference>
<gene>
    <name evidence="3 8" type="primary">gtfA</name>
    <name type="ordered locus">SP_1758</name>
</gene>